<evidence type="ECO:0000269" key="1">
    <source>
    </source>
</evidence>
<evidence type="ECO:0000303" key="2">
    <source>
    </source>
</evidence>
<evidence type="ECO:0000305" key="3"/>
<organism>
    <name type="scientific">Pinus strobus</name>
    <name type="common">Eastern white pine</name>
    <dbReference type="NCBI Taxonomy" id="3348"/>
    <lineage>
        <taxon>Eukaryota</taxon>
        <taxon>Viridiplantae</taxon>
        <taxon>Streptophyta</taxon>
        <taxon>Embryophyta</taxon>
        <taxon>Tracheophyta</taxon>
        <taxon>Spermatophyta</taxon>
        <taxon>Pinopsida</taxon>
        <taxon>Pinidae</taxon>
        <taxon>Conifers I</taxon>
        <taxon>Pinales</taxon>
        <taxon>Pinaceae</taxon>
        <taxon>Pinus</taxon>
        <taxon>Pinus subgen. Strobus</taxon>
    </lineage>
</organism>
<accession>P84734</accession>
<protein>
    <recommendedName>
        <fullName>Putative acid phosphatase PS18</fullName>
    </recommendedName>
</protein>
<proteinExistence type="evidence at protein level"/>
<name>PS18_PINST</name>
<keyword id="KW-0903">Direct protein sequencing</keyword>
<reference evidence="3" key="1">
    <citation type="journal article" date="2006" name="Mol. Plant Microbe Interact.">
        <title>Proteomic comparison of needles from blister rust-resistant and susceptible Pinus strobus seedlings reveals upregulation of putative disease resistance proteins.</title>
        <authorList>
            <person name="Smith J.A."/>
            <person name="Blanchette R.A."/>
            <person name="Burnes T.A."/>
            <person name="Jacobs J.J."/>
            <person name="Higgins L."/>
            <person name="Witthuhn B.A."/>
            <person name="David A.J."/>
            <person name="Gillman J.H."/>
        </authorList>
    </citation>
    <scope>PROTEIN SEQUENCE</scope>
    <source>
        <tissue evidence="1">Leaf</tissue>
    </source>
</reference>
<comment type="miscellaneous">
    <text evidence="1">On the 2D-gel the determined pI of this protein is: 6.1, its MW is: 81.5 kDa.</text>
</comment>
<feature type="chain" id="PRO_0000240621" description="Putative acid phosphatase PS18">
    <location>
        <begin position="1" status="less than"/>
        <end position="9" status="greater than"/>
    </location>
</feature>
<feature type="non-terminal residue" evidence="2">
    <location>
        <position position="1"/>
    </location>
</feature>
<feature type="non-terminal residue" evidence="2">
    <location>
        <position position="9"/>
    </location>
</feature>
<sequence length="9" mass="1045">SLSIMEPIR</sequence>